<name>RL31_THEAC</name>
<keyword id="KW-1185">Reference proteome</keyword>
<keyword id="KW-0687">Ribonucleoprotein</keyword>
<keyword id="KW-0689">Ribosomal protein</keyword>
<protein>
    <recommendedName>
        <fullName evidence="1">Large ribosomal subunit protein eL31</fullName>
    </recommendedName>
    <alternativeName>
        <fullName>50S ribosomal protein L31e</fullName>
    </alternativeName>
</protein>
<dbReference type="EMBL" id="AL445063">
    <property type="protein sequence ID" value="CAC11202.1"/>
    <property type="status" value="ALT_INIT"/>
    <property type="molecule type" value="Genomic_DNA"/>
</dbReference>
<dbReference type="RefSeq" id="WP_048162197.1">
    <property type="nucleotide sequence ID" value="NC_002578.1"/>
</dbReference>
<dbReference type="SMR" id="Q9HM17"/>
<dbReference type="FunCoup" id="Q9HM17">
    <property type="interactions" value="52"/>
</dbReference>
<dbReference type="STRING" id="273075.gene:9571269"/>
<dbReference type="PaxDb" id="273075-Ta0054"/>
<dbReference type="EnsemblBacteria" id="CAC11202">
    <property type="protein sequence ID" value="CAC11202"/>
    <property type="gene ID" value="CAC11202"/>
</dbReference>
<dbReference type="KEGG" id="tac:Ta0054"/>
<dbReference type="eggNOG" id="arCOG04473">
    <property type="taxonomic scope" value="Archaea"/>
</dbReference>
<dbReference type="HOGENOM" id="CLU_112570_3_2_2"/>
<dbReference type="InParanoid" id="Q9HM17"/>
<dbReference type="OrthoDB" id="10127at2157"/>
<dbReference type="Proteomes" id="UP000001024">
    <property type="component" value="Chromosome"/>
</dbReference>
<dbReference type="GO" id="GO:1990904">
    <property type="term" value="C:ribonucleoprotein complex"/>
    <property type="evidence" value="ECO:0007669"/>
    <property type="project" value="UniProtKB-KW"/>
</dbReference>
<dbReference type="GO" id="GO:0005840">
    <property type="term" value="C:ribosome"/>
    <property type="evidence" value="ECO:0007669"/>
    <property type="project" value="UniProtKB-KW"/>
</dbReference>
<dbReference type="GO" id="GO:0003735">
    <property type="term" value="F:structural constituent of ribosome"/>
    <property type="evidence" value="ECO:0007669"/>
    <property type="project" value="InterPro"/>
</dbReference>
<dbReference type="GO" id="GO:0006412">
    <property type="term" value="P:translation"/>
    <property type="evidence" value="ECO:0007669"/>
    <property type="project" value="UniProtKB-UniRule"/>
</dbReference>
<dbReference type="CDD" id="cd00463">
    <property type="entry name" value="Ribosomal_L31e"/>
    <property type="match status" value="1"/>
</dbReference>
<dbReference type="Gene3D" id="3.10.440.10">
    <property type="match status" value="1"/>
</dbReference>
<dbReference type="HAMAP" id="MF_00410">
    <property type="entry name" value="Ribosomal_eL31"/>
    <property type="match status" value="1"/>
</dbReference>
<dbReference type="InterPro" id="IPR000054">
    <property type="entry name" value="Ribosomal_eL31"/>
</dbReference>
<dbReference type="InterPro" id="IPR020052">
    <property type="entry name" value="Ribosomal_eL31_CS"/>
</dbReference>
<dbReference type="InterPro" id="IPR023621">
    <property type="entry name" value="Ribosomal_eL31_dom_sf"/>
</dbReference>
<dbReference type="NCBIfam" id="NF002258">
    <property type="entry name" value="PRK01192.1-1"/>
    <property type="match status" value="1"/>
</dbReference>
<dbReference type="Pfam" id="PF01198">
    <property type="entry name" value="Ribosomal_L31e"/>
    <property type="match status" value="1"/>
</dbReference>
<dbReference type="SMART" id="SM01380">
    <property type="entry name" value="Ribosomal_L31e"/>
    <property type="match status" value="1"/>
</dbReference>
<dbReference type="SUPFAM" id="SSF54575">
    <property type="entry name" value="Ribosomal protein L31e"/>
    <property type="match status" value="1"/>
</dbReference>
<dbReference type="PROSITE" id="PS01144">
    <property type="entry name" value="RIBOSOMAL_L31E"/>
    <property type="match status" value="1"/>
</dbReference>
<comment type="similarity">
    <text evidence="1">Belongs to the eukaryotic ribosomal protein eL31 family.</text>
</comment>
<comment type="sequence caution" evidence="1">
    <conflict type="erroneous initiation">
        <sequence resource="EMBL-CDS" id="CAC11202"/>
    </conflict>
</comment>
<proteinExistence type="inferred from homology"/>
<evidence type="ECO:0000305" key="1"/>
<sequence>MADETVAQEVIINVPLRDAKASSRKRRADTAVSILRNFVSKKMKIDKGKIWIDPKVSEKIWERGREHIPSKMSVKVIKLEEGTTEIIMP</sequence>
<gene>
    <name type="primary">rpl31e</name>
    <name type="ordered locus">Ta0054</name>
</gene>
<feature type="chain" id="PRO_0000153808" description="Large ribosomal subunit protein eL31">
    <location>
        <begin position="1"/>
        <end position="89"/>
    </location>
</feature>
<organism>
    <name type="scientific">Thermoplasma acidophilum (strain ATCC 25905 / DSM 1728 / JCM 9062 / NBRC 15155 / AMRC-C165)</name>
    <dbReference type="NCBI Taxonomy" id="273075"/>
    <lineage>
        <taxon>Archaea</taxon>
        <taxon>Methanobacteriati</taxon>
        <taxon>Thermoplasmatota</taxon>
        <taxon>Thermoplasmata</taxon>
        <taxon>Thermoplasmatales</taxon>
        <taxon>Thermoplasmataceae</taxon>
        <taxon>Thermoplasma</taxon>
    </lineage>
</organism>
<reference key="1">
    <citation type="journal article" date="2000" name="Nature">
        <title>The genome sequence of the thermoacidophilic scavenger Thermoplasma acidophilum.</title>
        <authorList>
            <person name="Ruepp A."/>
            <person name="Graml W."/>
            <person name="Santos-Martinez M.-L."/>
            <person name="Koretke K.K."/>
            <person name="Volker C."/>
            <person name="Mewes H.-W."/>
            <person name="Frishman D."/>
            <person name="Stocker S."/>
            <person name="Lupas A.N."/>
            <person name="Baumeister W."/>
        </authorList>
    </citation>
    <scope>NUCLEOTIDE SEQUENCE [LARGE SCALE GENOMIC DNA]</scope>
    <source>
        <strain>ATCC 25905 / DSM 1728 / JCM 9062 / NBRC 15155 / AMRC-C165</strain>
    </source>
</reference>
<accession>Q9HM17</accession>